<sequence length="190" mass="21893">MTPEQCEFIAGNEWIQINPQFNLDELHLICGDIGPFEAGMPIWVPLWIAVTLRKRRKCTIIPPQWLCVEELKKLVIAESGTNAFGQVPRFYLEIAHMFVQYAKEDLPDSDMIRVYVQDLWDKRSAKLNNSSTKFLGQVESCHARMDNITLMEVAYIKRSLITASREIEALNKSFHELSSQNSSDQRYVIA</sequence>
<feature type="chain" id="PRO_0000194817" description="Probable DNA replication complex GINS protein PSF2">
    <location>
        <begin position="1"/>
        <end position="190"/>
    </location>
</feature>
<organism>
    <name type="scientific">Brugia malayi</name>
    <name type="common">Filarial nematode worm</name>
    <dbReference type="NCBI Taxonomy" id="6279"/>
    <lineage>
        <taxon>Eukaryota</taxon>
        <taxon>Metazoa</taxon>
        <taxon>Ecdysozoa</taxon>
        <taxon>Nematoda</taxon>
        <taxon>Chromadorea</taxon>
        <taxon>Rhabditida</taxon>
        <taxon>Spirurina</taxon>
        <taxon>Spiruromorpha</taxon>
        <taxon>Filarioidea</taxon>
        <taxon>Onchocercidae</taxon>
        <taxon>Brugia</taxon>
    </lineage>
</organism>
<gene>
    <name type="ORF">BMBAC01P19.06</name>
</gene>
<accession>Q8IHI1</accession>
<comment type="function">
    <text evidence="1">The GINS complex plays an essential role in the initiation of DNA replication.</text>
</comment>
<comment type="subunit">
    <text evidence="1">Component of the GINS complex which is a heterotetramer of gins1, gins2, gins3 and gins4.</text>
</comment>
<comment type="subcellular location">
    <subcellularLocation>
        <location evidence="1">Nucleus</location>
    </subcellularLocation>
</comment>
<comment type="similarity">
    <text evidence="2">Belongs to the GINS2/PSF2 family.</text>
</comment>
<name>PSF2_BRUMA</name>
<dbReference type="EMBL" id="AL606837">
    <property type="protein sequence ID" value="CAC70161.1"/>
    <property type="molecule type" value="Genomic_DNA"/>
</dbReference>
<dbReference type="SMR" id="Q8IHI1"/>
<dbReference type="FunCoup" id="Q8IHI1">
    <property type="interactions" value="1355"/>
</dbReference>
<dbReference type="STRING" id="6279.Q8IHI1"/>
<dbReference type="WormBase" id="Bm3720">
    <property type="protein sequence ID" value="BM03790"/>
    <property type="gene ID" value="WBGene00223981"/>
</dbReference>
<dbReference type="InParanoid" id="Q8IHI1"/>
<dbReference type="Proteomes" id="UP000006672">
    <property type="component" value="Unassembled WGS sequence"/>
</dbReference>
<dbReference type="GO" id="GO:0000811">
    <property type="term" value="C:GINS complex"/>
    <property type="evidence" value="ECO:0007669"/>
    <property type="project" value="TreeGrafter"/>
</dbReference>
<dbReference type="GO" id="GO:0006260">
    <property type="term" value="P:DNA replication"/>
    <property type="evidence" value="ECO:0007669"/>
    <property type="project" value="UniProtKB-KW"/>
</dbReference>
<dbReference type="GO" id="GO:0000727">
    <property type="term" value="P:double-strand break repair via break-induced replication"/>
    <property type="evidence" value="ECO:0007669"/>
    <property type="project" value="TreeGrafter"/>
</dbReference>
<dbReference type="CDD" id="cd11712">
    <property type="entry name" value="GINS_A_psf2"/>
    <property type="match status" value="1"/>
</dbReference>
<dbReference type="CDD" id="cd21694">
    <property type="entry name" value="GINS_B_Psf2"/>
    <property type="match status" value="1"/>
</dbReference>
<dbReference type="FunFam" id="1.20.58.1020:FF:000001">
    <property type="entry name" value="DNA replication complex GINS protein PSF2"/>
    <property type="match status" value="1"/>
</dbReference>
<dbReference type="FunFam" id="3.40.5.50:FF:000001">
    <property type="entry name" value="DNA replication complex GINS protein PSF2"/>
    <property type="match status" value="1"/>
</dbReference>
<dbReference type="Gene3D" id="1.20.58.1020">
    <property type="match status" value="1"/>
</dbReference>
<dbReference type="Gene3D" id="3.40.5.50">
    <property type="match status" value="1"/>
</dbReference>
<dbReference type="InterPro" id="IPR021151">
    <property type="entry name" value="GINS_A"/>
</dbReference>
<dbReference type="InterPro" id="IPR036224">
    <property type="entry name" value="GINS_bundle-like_dom_sf"/>
</dbReference>
<dbReference type="InterPro" id="IPR007257">
    <property type="entry name" value="GINS_Psf2"/>
</dbReference>
<dbReference type="InterPro" id="IPR056784">
    <property type="entry name" value="PSF2_N"/>
</dbReference>
<dbReference type="PANTHER" id="PTHR12772">
    <property type="entry name" value="DNA REPLICATION COMPLEX GINS PROTEIN PSF2"/>
    <property type="match status" value="1"/>
</dbReference>
<dbReference type="PANTHER" id="PTHR12772:SF0">
    <property type="entry name" value="DNA REPLICATION COMPLEX GINS PROTEIN PSF2"/>
    <property type="match status" value="1"/>
</dbReference>
<dbReference type="Pfam" id="PF25005">
    <property type="entry name" value="PSF2_N"/>
    <property type="match status" value="1"/>
</dbReference>
<dbReference type="Pfam" id="PF05916">
    <property type="entry name" value="Sld5"/>
    <property type="match status" value="1"/>
</dbReference>
<dbReference type="PIRSF" id="PIRSF028998">
    <property type="entry name" value="GINS_Psf2_subgr"/>
    <property type="match status" value="1"/>
</dbReference>
<dbReference type="SUPFAM" id="SSF158573">
    <property type="entry name" value="GINS helical bundle-like"/>
    <property type="match status" value="1"/>
</dbReference>
<dbReference type="SUPFAM" id="SSF160059">
    <property type="entry name" value="PriA/YqbF domain"/>
    <property type="match status" value="1"/>
</dbReference>
<reference key="1">
    <citation type="journal article" date="2002" name="Genome Biol.">
        <title>Conservation of long-range and micro-synteny between the genomes of two distantly related nematodes.</title>
        <authorList>
            <person name="Gulliano D.B."/>
            <person name="Hall N."/>
            <person name="Jones S.J.M."/>
            <person name="Clark L.N."/>
            <person name="Corton C.H."/>
            <person name="Barrell B.G."/>
            <person name="Blaxter M.L."/>
        </authorList>
    </citation>
    <scope>NUCLEOTIDE SEQUENCE [GENOMIC DNA]</scope>
</reference>
<protein>
    <recommendedName>
        <fullName>Probable DNA replication complex GINS protein PSF2</fullName>
    </recommendedName>
    <alternativeName>
        <fullName>GINS complex subunit 2</fullName>
    </alternativeName>
</protein>
<evidence type="ECO:0000250" key="1"/>
<evidence type="ECO:0000305" key="2"/>
<keyword id="KW-0235">DNA replication</keyword>
<keyword id="KW-0539">Nucleus</keyword>
<keyword id="KW-1185">Reference proteome</keyword>
<proteinExistence type="inferred from homology"/>